<sequence>MSMSDPIADMLTRIRNAQMVEKVSVSMPSSKVKVAIAQVLKDEGYIDDFAVKADGAKAELNIALKYYAGRPVIERLERVSKPGLRVYRGRNEIPQVMNGLGVAIVSTPKGVMTDRKARATGVGGEVICYVA</sequence>
<dbReference type="EMBL" id="BX571965">
    <property type="protein sequence ID" value="CAH37210.1"/>
    <property type="molecule type" value="Genomic_DNA"/>
</dbReference>
<dbReference type="RefSeq" id="WP_004185153.1">
    <property type="nucleotide sequence ID" value="NZ_CP009538.1"/>
</dbReference>
<dbReference type="RefSeq" id="YP_109793.1">
    <property type="nucleotide sequence ID" value="NC_006350.1"/>
</dbReference>
<dbReference type="SMR" id="Q63Q25"/>
<dbReference type="STRING" id="272560.BPSL3199"/>
<dbReference type="GeneID" id="93061818"/>
<dbReference type="KEGG" id="bps:BPSL3199"/>
<dbReference type="PATRIC" id="fig|272560.51.peg.2039"/>
<dbReference type="eggNOG" id="COG0096">
    <property type="taxonomic scope" value="Bacteria"/>
</dbReference>
<dbReference type="Proteomes" id="UP000000605">
    <property type="component" value="Chromosome 1"/>
</dbReference>
<dbReference type="GO" id="GO:1990904">
    <property type="term" value="C:ribonucleoprotein complex"/>
    <property type="evidence" value="ECO:0007669"/>
    <property type="project" value="UniProtKB-KW"/>
</dbReference>
<dbReference type="GO" id="GO:0005840">
    <property type="term" value="C:ribosome"/>
    <property type="evidence" value="ECO:0007669"/>
    <property type="project" value="UniProtKB-KW"/>
</dbReference>
<dbReference type="GO" id="GO:0019843">
    <property type="term" value="F:rRNA binding"/>
    <property type="evidence" value="ECO:0007669"/>
    <property type="project" value="UniProtKB-UniRule"/>
</dbReference>
<dbReference type="GO" id="GO:0003735">
    <property type="term" value="F:structural constituent of ribosome"/>
    <property type="evidence" value="ECO:0007669"/>
    <property type="project" value="InterPro"/>
</dbReference>
<dbReference type="GO" id="GO:0006412">
    <property type="term" value="P:translation"/>
    <property type="evidence" value="ECO:0007669"/>
    <property type="project" value="UniProtKB-UniRule"/>
</dbReference>
<dbReference type="FunFam" id="3.30.1370.30:FF:000003">
    <property type="entry name" value="30S ribosomal protein S8"/>
    <property type="match status" value="1"/>
</dbReference>
<dbReference type="FunFam" id="3.30.1490.10:FF:000001">
    <property type="entry name" value="30S ribosomal protein S8"/>
    <property type="match status" value="1"/>
</dbReference>
<dbReference type="Gene3D" id="3.30.1370.30">
    <property type="match status" value="1"/>
</dbReference>
<dbReference type="Gene3D" id="3.30.1490.10">
    <property type="match status" value="1"/>
</dbReference>
<dbReference type="HAMAP" id="MF_01302_B">
    <property type="entry name" value="Ribosomal_uS8_B"/>
    <property type="match status" value="1"/>
</dbReference>
<dbReference type="InterPro" id="IPR000630">
    <property type="entry name" value="Ribosomal_uS8"/>
</dbReference>
<dbReference type="InterPro" id="IPR047863">
    <property type="entry name" value="Ribosomal_uS8_CS"/>
</dbReference>
<dbReference type="InterPro" id="IPR035987">
    <property type="entry name" value="Ribosomal_uS8_sf"/>
</dbReference>
<dbReference type="NCBIfam" id="NF001109">
    <property type="entry name" value="PRK00136.1"/>
    <property type="match status" value="1"/>
</dbReference>
<dbReference type="PANTHER" id="PTHR11758">
    <property type="entry name" value="40S RIBOSOMAL PROTEIN S15A"/>
    <property type="match status" value="1"/>
</dbReference>
<dbReference type="Pfam" id="PF00410">
    <property type="entry name" value="Ribosomal_S8"/>
    <property type="match status" value="1"/>
</dbReference>
<dbReference type="SUPFAM" id="SSF56047">
    <property type="entry name" value="Ribosomal protein S8"/>
    <property type="match status" value="1"/>
</dbReference>
<dbReference type="PROSITE" id="PS00053">
    <property type="entry name" value="RIBOSOMAL_S8"/>
    <property type="match status" value="1"/>
</dbReference>
<comment type="function">
    <text evidence="1">One of the primary rRNA binding proteins, it binds directly to 16S rRNA central domain where it helps coordinate assembly of the platform of the 30S subunit.</text>
</comment>
<comment type="subunit">
    <text evidence="1">Part of the 30S ribosomal subunit. Contacts proteins S5 and S12.</text>
</comment>
<comment type="similarity">
    <text evidence="1">Belongs to the universal ribosomal protein uS8 family.</text>
</comment>
<feature type="chain" id="PRO_0000126385" description="Small ribosomal subunit protein uS8">
    <location>
        <begin position="1"/>
        <end position="131"/>
    </location>
</feature>
<organism>
    <name type="scientific">Burkholderia pseudomallei (strain K96243)</name>
    <dbReference type="NCBI Taxonomy" id="272560"/>
    <lineage>
        <taxon>Bacteria</taxon>
        <taxon>Pseudomonadati</taxon>
        <taxon>Pseudomonadota</taxon>
        <taxon>Betaproteobacteria</taxon>
        <taxon>Burkholderiales</taxon>
        <taxon>Burkholderiaceae</taxon>
        <taxon>Burkholderia</taxon>
        <taxon>pseudomallei group</taxon>
    </lineage>
</organism>
<reference key="1">
    <citation type="journal article" date="2004" name="Proc. Natl. Acad. Sci. U.S.A.">
        <title>Genomic plasticity of the causative agent of melioidosis, Burkholderia pseudomallei.</title>
        <authorList>
            <person name="Holden M.T.G."/>
            <person name="Titball R.W."/>
            <person name="Peacock S.J."/>
            <person name="Cerdeno-Tarraga A.-M."/>
            <person name="Atkins T."/>
            <person name="Crossman L.C."/>
            <person name="Pitt T."/>
            <person name="Churcher C."/>
            <person name="Mungall K.L."/>
            <person name="Bentley S.D."/>
            <person name="Sebaihia M."/>
            <person name="Thomson N.R."/>
            <person name="Bason N."/>
            <person name="Beacham I.R."/>
            <person name="Brooks K."/>
            <person name="Brown K.A."/>
            <person name="Brown N.F."/>
            <person name="Challis G.L."/>
            <person name="Cherevach I."/>
            <person name="Chillingworth T."/>
            <person name="Cronin A."/>
            <person name="Crossett B."/>
            <person name="Davis P."/>
            <person name="DeShazer D."/>
            <person name="Feltwell T."/>
            <person name="Fraser A."/>
            <person name="Hance Z."/>
            <person name="Hauser H."/>
            <person name="Holroyd S."/>
            <person name="Jagels K."/>
            <person name="Keith K.E."/>
            <person name="Maddison M."/>
            <person name="Moule S."/>
            <person name="Price C."/>
            <person name="Quail M.A."/>
            <person name="Rabbinowitsch E."/>
            <person name="Rutherford K."/>
            <person name="Sanders M."/>
            <person name="Simmonds M."/>
            <person name="Songsivilai S."/>
            <person name="Stevens K."/>
            <person name="Tumapa S."/>
            <person name="Vesaratchavest M."/>
            <person name="Whitehead S."/>
            <person name="Yeats C."/>
            <person name="Barrell B.G."/>
            <person name="Oyston P.C.F."/>
            <person name="Parkhill J."/>
        </authorList>
    </citation>
    <scope>NUCLEOTIDE SEQUENCE [LARGE SCALE GENOMIC DNA]</scope>
    <source>
        <strain>K96243</strain>
    </source>
</reference>
<evidence type="ECO:0000255" key="1">
    <source>
        <dbReference type="HAMAP-Rule" id="MF_01302"/>
    </source>
</evidence>
<evidence type="ECO:0000305" key="2"/>
<keyword id="KW-1185">Reference proteome</keyword>
<keyword id="KW-0687">Ribonucleoprotein</keyword>
<keyword id="KW-0689">Ribosomal protein</keyword>
<keyword id="KW-0694">RNA-binding</keyword>
<keyword id="KW-0699">rRNA-binding</keyword>
<proteinExistence type="inferred from homology"/>
<gene>
    <name evidence="1" type="primary">rpsH</name>
    <name type="ordered locus">BPSL3199</name>
</gene>
<protein>
    <recommendedName>
        <fullName evidence="1">Small ribosomal subunit protein uS8</fullName>
    </recommendedName>
    <alternativeName>
        <fullName evidence="2">30S ribosomal protein S8</fullName>
    </alternativeName>
</protein>
<accession>Q63Q25</accession>
<name>RS8_BURPS</name>